<comment type="function">
    <text evidence="1 2 6">Virulence factor (By similarity). Involved in the degradation of glycogen of the mammalian host cells. Hydrolyzes the alpha-1,6-branchpoints of glycogen (By similarity). Hydrolyzes pullulan (PubMed:11083842). Does not hydrolyze dextran. Binds to mouse lung alveolar type II cells that are rich in glycogen stores. Is an alpha-glucan-specific carbohydrate-binding protein, which binds to amylose (pure alpha-(1,4)-linked glucose), amylopectin (alpha-(1,4)-linked glucose with alpha-(1,6) branch points), pullulan (linear polymer of mixed alpha-(1,4)- and alpha-(1,6)-linked glucose) and glycogen (similar to amylopectin with more frequent alpha-(1,6) branch points) in vitro. Does not bind to dextran (a linear polymer of alpha-(1,6)-linked glucose) (By similarity).</text>
</comment>
<comment type="catalytic activity">
    <reaction evidence="6">
        <text>Hydrolysis of (1-&gt;6)-alpha-D-glucosidic linkages in pullulan, amylopectin and glycogen, and in the alpha- and beta-limit dextrins of amylopectin and glycogen.</text>
        <dbReference type="EC" id="3.2.1.41"/>
    </reaction>
</comment>
<comment type="activity regulation">
    <text evidence="1">Inhibited by 4-O-alpha-D-glucopyranosylmoranoline (G1M).</text>
</comment>
<comment type="subcellular location">
    <subcellularLocation>
        <location evidence="4">Secreted</location>
        <location evidence="4">Cell wall</location>
        <topology evidence="4">Peptidoglycan-anchor</topology>
    </subcellularLocation>
    <subcellularLocation>
        <location evidence="6">Cell surface</location>
    </subcellularLocation>
    <text evidence="1">Localizes to cytoplasm in the lung alveolar type II cells of the mouse and human hosts.</text>
</comment>
<comment type="domain">
    <text evidence="1">The N-terminal tandem family 41 carbohydrate-binding modules (CBM) are involved in carbohydrate binding. The C-terminal glycosyl hydrolase 13 (GH13) domain is involved in catalysis.</text>
</comment>
<comment type="similarity">
    <text evidence="8">Belongs to the glycosyl hydrolase 13 family.</text>
</comment>
<keyword id="KW-0106">Calcium</keyword>
<keyword id="KW-0134">Cell wall</keyword>
<keyword id="KW-0326">Glycosidase</keyword>
<keyword id="KW-0378">Hydrolase</keyword>
<keyword id="KW-0479">Metal-binding</keyword>
<keyword id="KW-0572">Peptidoglycan-anchor</keyword>
<keyword id="KW-0964">Secreted</keyword>
<keyword id="KW-0732">Signal</keyword>
<keyword id="KW-0843">Virulence</keyword>
<accession>Q9F930</accession>
<proteinExistence type="evidence at protein level"/>
<gene>
    <name evidence="7 9" type="primary">spuA</name>
</gene>
<reference evidence="9" key="1">
    <citation type="journal article" date="2000" name="Infect. Immun.">
        <title>Antigenicity, expression, and molecular characterization of surface-located pullulanase of Streptococcus pneumoniae.</title>
        <authorList>
            <person name="Bongaerts R.J."/>
            <person name="Heinz H.P."/>
            <person name="Hadding U."/>
            <person name="Zysk G."/>
        </authorList>
    </citation>
    <scope>NUCLEOTIDE SEQUENCE [GENOMIC DNA]</scope>
    <scope>FUNCTION</scope>
    <scope>CATALYTIC ACTIVITY</scope>
    <scope>SUBCELLULAR LOCATION</scope>
    <source>
        <strain evidence="7 9">3.B / Serotype 1</strain>
    </source>
</reference>
<feature type="signal peptide" evidence="3">
    <location>
        <begin position="1"/>
        <end position="44"/>
    </location>
</feature>
<feature type="chain" id="PRO_0000451848" description="Pullulanase A" evidence="3">
    <location>
        <begin position="45"/>
        <end position="1287"/>
    </location>
</feature>
<feature type="propeptide" id="PRO_5025750514" description="Removed by sortase" evidence="4">
    <location>
        <begin position="1257"/>
        <end position="1287"/>
    </location>
</feature>
<feature type="region of interest" description="Disordered" evidence="5">
    <location>
        <begin position="42"/>
        <end position="139"/>
    </location>
</feature>
<feature type="region of interest" description="Disordered" evidence="5">
    <location>
        <begin position="1147"/>
        <end position="1255"/>
    </location>
</feature>
<feature type="short sequence motif" description="LPXTG sorting signal" evidence="4">
    <location>
        <begin position="1253"/>
        <end position="1257"/>
    </location>
</feature>
<feature type="compositionally biased region" description="Low complexity" evidence="5">
    <location>
        <begin position="48"/>
        <end position="61"/>
    </location>
</feature>
<feature type="compositionally biased region" description="Polar residues" evidence="5">
    <location>
        <begin position="79"/>
        <end position="90"/>
    </location>
</feature>
<feature type="compositionally biased region" description="Low complexity" evidence="5">
    <location>
        <begin position="99"/>
        <end position="113"/>
    </location>
</feature>
<feature type="compositionally biased region" description="Low complexity" evidence="5">
    <location>
        <begin position="122"/>
        <end position="133"/>
    </location>
</feature>
<feature type="compositionally biased region" description="Basic and acidic residues" evidence="5">
    <location>
        <begin position="1156"/>
        <end position="1203"/>
    </location>
</feature>
<feature type="compositionally biased region" description="Low complexity" evidence="5">
    <location>
        <begin position="1212"/>
        <end position="1225"/>
    </location>
</feature>
<feature type="compositionally biased region" description="Basic and acidic residues" evidence="5">
    <location>
        <begin position="1228"/>
        <end position="1239"/>
    </location>
</feature>
<feature type="active site" description="Nucleophile" evidence="1">
    <location>
        <position position="785"/>
    </location>
</feature>
<feature type="active site" description="Proton donor" evidence="1">
    <location>
        <position position="814"/>
    </location>
</feature>
<feature type="binding site" evidence="1">
    <location>
        <begin position="163"/>
        <end position="165"/>
    </location>
    <ligand>
        <name>substrate</name>
    </ligand>
</feature>
<feature type="binding site" evidence="1">
    <location>
        <position position="175"/>
    </location>
    <ligand>
        <name>substrate</name>
    </ligand>
</feature>
<feature type="binding site" evidence="1">
    <location>
        <position position="221"/>
    </location>
    <ligand>
        <name>substrate</name>
    </ligand>
</feature>
<feature type="binding site" evidence="1">
    <location>
        <begin position="270"/>
        <end position="272"/>
    </location>
    <ligand>
        <name>substrate</name>
    </ligand>
</feature>
<feature type="binding site" evidence="1">
    <location>
        <position position="283"/>
    </location>
    <ligand>
        <name>substrate</name>
    </ligand>
</feature>
<feature type="binding site" evidence="1">
    <location>
        <position position="325"/>
    </location>
    <ligand>
        <name>substrate</name>
    </ligand>
</feature>
<feature type="binding site" evidence="1">
    <location>
        <position position="330"/>
    </location>
    <ligand>
        <name>substrate</name>
    </ligand>
</feature>
<feature type="binding site" evidence="1">
    <location>
        <position position="668"/>
    </location>
    <ligand>
        <name>Ca(2+)</name>
        <dbReference type="ChEBI" id="CHEBI:29108"/>
        <label>1</label>
    </ligand>
</feature>
<feature type="binding site" evidence="1">
    <location>
        <position position="670"/>
    </location>
    <ligand>
        <name>Ca(2+)</name>
        <dbReference type="ChEBI" id="CHEBI:29108"/>
        <label>1</label>
    </ligand>
</feature>
<feature type="binding site" evidence="1">
    <location>
        <begin position="674"/>
        <end position="675"/>
    </location>
    <ligand>
        <name>substrate</name>
    </ligand>
</feature>
<feature type="binding site" evidence="1">
    <location>
        <position position="750"/>
    </location>
    <ligand>
        <name>substrate</name>
    </ligand>
</feature>
<feature type="binding site" evidence="1">
    <location>
        <position position="816"/>
    </location>
    <ligand>
        <name>substrate</name>
    </ligand>
</feature>
<feature type="binding site" evidence="1">
    <location>
        <position position="835"/>
    </location>
    <ligand>
        <name>Ca(2+)</name>
        <dbReference type="ChEBI" id="CHEBI:29108"/>
        <label>2</label>
    </ligand>
</feature>
<feature type="binding site" evidence="1">
    <location>
        <position position="838"/>
    </location>
    <ligand>
        <name>Ca(2+)</name>
        <dbReference type="ChEBI" id="CHEBI:29108"/>
        <label>2</label>
    </ligand>
</feature>
<feature type="binding site" evidence="1">
    <location>
        <position position="839"/>
    </location>
    <ligand>
        <name>Ca(2+)</name>
        <dbReference type="ChEBI" id="CHEBI:29108"/>
        <label>2</label>
    </ligand>
</feature>
<feature type="binding site" evidence="1">
    <location>
        <position position="846"/>
    </location>
    <ligand>
        <name>substrate</name>
    </ligand>
</feature>
<feature type="binding site" evidence="1">
    <location>
        <position position="849"/>
    </location>
    <ligand>
        <name>substrate</name>
    </ligand>
</feature>
<feature type="binding site" evidence="1">
    <location>
        <position position="856"/>
    </location>
    <ligand>
        <name>substrate</name>
    </ligand>
</feature>
<feature type="binding site" evidence="1">
    <location>
        <position position="889"/>
    </location>
    <ligand>
        <name>Ca(2+)</name>
        <dbReference type="ChEBI" id="CHEBI:29108"/>
        <label>2</label>
    </ligand>
</feature>
<feature type="binding site" evidence="1">
    <location>
        <position position="893"/>
    </location>
    <ligand>
        <name>Ca(2+)</name>
        <dbReference type="ChEBI" id="CHEBI:29108"/>
        <label>2</label>
    </ligand>
</feature>
<feature type="binding site" evidence="1">
    <location>
        <position position="903"/>
    </location>
    <ligand>
        <name>substrate</name>
    </ligand>
</feature>
<feature type="binding site" evidence="1">
    <location>
        <position position="976"/>
    </location>
    <ligand>
        <name>substrate</name>
    </ligand>
</feature>
<feature type="binding site" evidence="1">
    <location>
        <begin position="996"/>
        <end position="998"/>
    </location>
    <ligand>
        <name>substrate</name>
    </ligand>
</feature>
<feature type="binding site" evidence="1">
    <location>
        <position position="999"/>
    </location>
    <ligand>
        <name>Ca(2+)</name>
        <dbReference type="ChEBI" id="CHEBI:29108"/>
        <label>1</label>
    </ligand>
</feature>
<feature type="site" description="Transition state stabilizer" evidence="1">
    <location>
        <position position="902"/>
    </location>
</feature>
<feature type="modified residue" description="Pentaglycyl murein peptidoglycan amidated threonine" evidence="4">
    <location>
        <position position="1256"/>
    </location>
</feature>
<protein>
    <recommendedName>
        <fullName evidence="7">Pullulanase A</fullName>
        <ecNumber evidence="6">3.2.1.41</ecNumber>
    </recommendedName>
    <alternativeName>
        <fullName evidence="8">Alpha-dextrin endo-1,6-alpha-glucosidase</fullName>
    </alternativeName>
    <alternativeName>
        <fullName evidence="8">Pullulan 6-glucanohydrolase</fullName>
    </alternativeName>
</protein>
<evidence type="ECO:0000250" key="1">
    <source>
        <dbReference type="UniProtKB" id="A0A0H2UNG0"/>
    </source>
</evidence>
<evidence type="ECO:0000250" key="2">
    <source>
        <dbReference type="UniProtKB" id="A0A0H2ZL64"/>
    </source>
</evidence>
<evidence type="ECO:0000255" key="3"/>
<evidence type="ECO:0000255" key="4">
    <source>
        <dbReference type="PROSITE-ProRule" id="PRU00477"/>
    </source>
</evidence>
<evidence type="ECO:0000256" key="5">
    <source>
        <dbReference type="SAM" id="MobiDB-lite"/>
    </source>
</evidence>
<evidence type="ECO:0000269" key="6">
    <source>
    </source>
</evidence>
<evidence type="ECO:0000303" key="7">
    <source>
    </source>
</evidence>
<evidence type="ECO:0000305" key="8"/>
<evidence type="ECO:0000312" key="9">
    <source>
        <dbReference type="EMBL" id="AAG33958.1"/>
    </source>
</evidence>
<name>PULA_STREE</name>
<sequence>MRKTPSHTEKKMVYSIRSLKNGTGSVLIGASLVLLAMATPTISSDESTPTTNEPNNRNTTTLAQPLTDTAAGSGKNESDISSPGNANASLEKTEEKPATEPTTPAASPADPAPQTGQDRSSEPTTSTSPVTTETKAEEPIEDNYFRIHVKKLPEENKDAQGLWTWDDVEKPSENWPNGALSFKDAKKDDYGYYLDVKLKGEQAKKISFLINNTAGKNLTGDKSVEKLVPKMNEAWLDQDYKVFSYEPQPAGTVRVNYYRTDGNYDKKSLWYWGDVKNPSSAQWPDGTDFTATGKYGRYIDIPLNEAAREFGFLLLDESKQGDDVKIRKENYKFTDLKNHSQIFLKDDDESIYTNPYYVHDIRMTGAQHVGTSSIESSFSTLVGAKKEDILKHSNITNHLGNKVTITDVAIDEAGKKVTYSGDFSDTKHPYTVSYNSDQFTTKTSWRLKDETYSYDGKLGADLKEEGKQVDLTLWSPSADKVSVVVYDKNDPDKVVGTVALEKGERGTWKQTLDSTNKLGITDFTGYYYQYQIERQGKTVLALDPYAKSLAAWNSDDAKIDDAHKVAKAAFVDPAKLGPQDLTYGKIHNFKTREDAVIYEAHVRDFTSDPAIAKDLTKPFGTFEAFIEKLDYLKDLGVTHIQLLPVLSYYFVNELKNHEHLSDYASSNSNYNWGYDPQNYFSLTGMYSSDPKNPEKRIAEFKNLINEIHKRGMGAILDVVYNHTAKVDIFEDLEPNYYHFMDADGTPRTSFGGGRLGTTHHMTKRLLVDSIKYLVDTYKVDGFRFDMMGDHDAASIEEAYKAARALNPNLIMLGEGWRTYAGDENMPTKAADQDWMKHTDTVAVFSDDIRNNLKSGYPNEGQPAFITGGKRDVNTIFKNLIAQPTNFEADSPGDVIQYIAAHDNLTLFDIIAQSIKKDPSKAENYAEIHRRLRLGNLMVLTAQGTPFIHSGQEYGRTKQFRNPAYRTPVAEDKVPNKSHLLRDKDGNPFDYPYFIHDSYDSSDAVNKFDWTKATDGKAYPENVKSRDYMKGLIALRQSTDAFRLKSLQDIKDRVHLITVPGQNGVEKEDVVIGYQITAPNGDIYAVFVNADEKAREFNLGTAFAHLRNAEVLADENQAGSVGIANPKGLEWTEKGLKLNALTATVLRVSQNGTSHESTAEEKPDSTPSKPEHQNEASHPAHQDPAPEARPDSTKPDAKVADAENKPSQATADSQAEQPAQEAQASSVKEAVRKESVENSSKENISATPDRQAELPNTGIKNENKLLFAGISLLALLGLGFLLKNKKEN</sequence>
<organism evidence="9">
    <name type="scientific">Streptococcus pneumoniae</name>
    <dbReference type="NCBI Taxonomy" id="1313"/>
    <lineage>
        <taxon>Bacteria</taxon>
        <taxon>Bacillati</taxon>
        <taxon>Bacillota</taxon>
        <taxon>Bacilli</taxon>
        <taxon>Lactobacillales</taxon>
        <taxon>Streptococcaceae</taxon>
        <taxon>Streptococcus</taxon>
    </lineage>
</organism>
<dbReference type="EC" id="3.2.1.41" evidence="6"/>
<dbReference type="EMBL" id="AF217414">
    <property type="protein sequence ID" value="AAG33958.1"/>
    <property type="molecule type" value="Genomic_DNA"/>
</dbReference>
<dbReference type="RefSeq" id="WP_001860626.1">
    <property type="nucleotide sequence ID" value="NZ_JACVIV010000029.1"/>
</dbReference>
<dbReference type="SMR" id="Q9F930"/>
<dbReference type="CAZy" id="CBM41">
    <property type="family name" value="Carbohydrate-Binding Module Family 41"/>
</dbReference>
<dbReference type="CAZy" id="CBM48">
    <property type="family name" value="Carbohydrate-Binding Module Family 48"/>
</dbReference>
<dbReference type="CAZy" id="GH13">
    <property type="family name" value="Glycoside Hydrolase Family 13"/>
</dbReference>
<dbReference type="GO" id="GO:0009986">
    <property type="term" value="C:cell surface"/>
    <property type="evidence" value="ECO:0000314"/>
    <property type="project" value="UniProtKB"/>
</dbReference>
<dbReference type="GO" id="GO:0005576">
    <property type="term" value="C:extracellular region"/>
    <property type="evidence" value="ECO:0007669"/>
    <property type="project" value="UniProtKB-KW"/>
</dbReference>
<dbReference type="GO" id="GO:0009275">
    <property type="term" value="C:Gram-positive-bacterium-type cell wall"/>
    <property type="evidence" value="ECO:0000305"/>
    <property type="project" value="UniProtKB"/>
</dbReference>
<dbReference type="GO" id="GO:0030246">
    <property type="term" value="F:carbohydrate binding"/>
    <property type="evidence" value="ECO:0007669"/>
    <property type="project" value="InterPro"/>
</dbReference>
<dbReference type="GO" id="GO:0046872">
    <property type="term" value="F:metal ion binding"/>
    <property type="evidence" value="ECO:0007669"/>
    <property type="project" value="UniProtKB-KW"/>
</dbReference>
<dbReference type="GO" id="GO:0051060">
    <property type="term" value="F:pullulanase activity"/>
    <property type="evidence" value="ECO:0007669"/>
    <property type="project" value="UniProtKB-EC"/>
</dbReference>
<dbReference type="GO" id="GO:0005975">
    <property type="term" value="P:carbohydrate metabolic process"/>
    <property type="evidence" value="ECO:0007669"/>
    <property type="project" value="InterPro"/>
</dbReference>
<dbReference type="CDD" id="cd11341">
    <property type="entry name" value="AmyAc_Pullulanase_LD-like"/>
    <property type="match status" value="1"/>
</dbReference>
<dbReference type="CDD" id="cd10315">
    <property type="entry name" value="CBM41_pullulanase"/>
    <property type="match status" value="2"/>
</dbReference>
<dbReference type="CDD" id="cd02860">
    <property type="entry name" value="E_set_Pullulanase"/>
    <property type="match status" value="1"/>
</dbReference>
<dbReference type="Gene3D" id="2.60.40.1110">
    <property type="match status" value="2"/>
</dbReference>
<dbReference type="Gene3D" id="2.60.40.1220">
    <property type="match status" value="1"/>
</dbReference>
<dbReference type="Gene3D" id="3.20.20.80">
    <property type="entry name" value="Glycosidases"/>
    <property type="match status" value="1"/>
</dbReference>
<dbReference type="Gene3D" id="2.60.40.1180">
    <property type="entry name" value="Golgi alpha-mannosidase II"/>
    <property type="match status" value="1"/>
</dbReference>
<dbReference type="Gene3D" id="2.60.40.10">
    <property type="entry name" value="Immunoglobulins"/>
    <property type="match status" value="1"/>
</dbReference>
<dbReference type="InterPro" id="IPR013784">
    <property type="entry name" value="Carb-bd-like_fold"/>
</dbReference>
<dbReference type="InterPro" id="IPR005323">
    <property type="entry name" value="CBM41_pullulanase"/>
</dbReference>
<dbReference type="InterPro" id="IPR014755">
    <property type="entry name" value="Cu-Rt/internalin_Ig-like"/>
</dbReference>
<dbReference type="InterPro" id="IPR006047">
    <property type="entry name" value="Glyco_hydro_13_cat_dom"/>
</dbReference>
<dbReference type="InterPro" id="IPR004193">
    <property type="entry name" value="Glyco_hydro_13_N"/>
</dbReference>
<dbReference type="InterPro" id="IPR013780">
    <property type="entry name" value="Glyco_hydro_b"/>
</dbReference>
<dbReference type="InterPro" id="IPR017853">
    <property type="entry name" value="Glycoside_hydrolase_SF"/>
</dbReference>
<dbReference type="InterPro" id="IPR013783">
    <property type="entry name" value="Ig-like_fold"/>
</dbReference>
<dbReference type="InterPro" id="IPR014756">
    <property type="entry name" value="Ig_E-set"/>
</dbReference>
<dbReference type="InterPro" id="IPR019931">
    <property type="entry name" value="LPXTG_anchor"/>
</dbReference>
<dbReference type="InterPro" id="IPR011838">
    <property type="entry name" value="Pullulan_Gpos"/>
</dbReference>
<dbReference type="InterPro" id="IPR040806">
    <property type="entry name" value="SpuA_C"/>
</dbReference>
<dbReference type="InterPro" id="IPR005877">
    <property type="entry name" value="YSIRK_signal_dom"/>
</dbReference>
<dbReference type="NCBIfam" id="TIGR01167">
    <property type="entry name" value="LPXTG_anchor"/>
    <property type="match status" value="1"/>
</dbReference>
<dbReference type="NCBIfam" id="TIGR02102">
    <property type="entry name" value="pullulan_Gpos"/>
    <property type="match status" value="1"/>
</dbReference>
<dbReference type="NCBIfam" id="TIGR01168">
    <property type="entry name" value="YSIRK_signal"/>
    <property type="match status" value="1"/>
</dbReference>
<dbReference type="PANTHER" id="PTHR43002">
    <property type="entry name" value="GLYCOGEN DEBRANCHING ENZYME"/>
    <property type="match status" value="1"/>
</dbReference>
<dbReference type="Pfam" id="PF00128">
    <property type="entry name" value="Alpha-amylase"/>
    <property type="match status" value="1"/>
</dbReference>
<dbReference type="Pfam" id="PF02922">
    <property type="entry name" value="CBM_48"/>
    <property type="match status" value="1"/>
</dbReference>
<dbReference type="Pfam" id="PF00746">
    <property type="entry name" value="Gram_pos_anchor"/>
    <property type="match status" value="1"/>
</dbReference>
<dbReference type="Pfam" id="PF03714">
    <property type="entry name" value="PUD"/>
    <property type="match status" value="2"/>
</dbReference>
<dbReference type="Pfam" id="PF18033">
    <property type="entry name" value="SpuA_C"/>
    <property type="match status" value="1"/>
</dbReference>
<dbReference type="Pfam" id="PF04650">
    <property type="entry name" value="YSIRK_signal"/>
    <property type="match status" value="1"/>
</dbReference>
<dbReference type="SMART" id="SM00642">
    <property type="entry name" value="Aamy"/>
    <property type="match status" value="1"/>
</dbReference>
<dbReference type="SUPFAM" id="SSF51445">
    <property type="entry name" value="(Trans)glycosidases"/>
    <property type="match status" value="1"/>
</dbReference>
<dbReference type="SUPFAM" id="SSF81296">
    <property type="entry name" value="E set domains"/>
    <property type="match status" value="1"/>
</dbReference>
<dbReference type="SUPFAM" id="SSF49452">
    <property type="entry name" value="Starch-binding domain-like"/>
    <property type="match status" value="2"/>
</dbReference>
<dbReference type="PROSITE" id="PS50847">
    <property type="entry name" value="GRAM_POS_ANCHORING"/>
    <property type="match status" value="1"/>
</dbReference>